<reference key="1">
    <citation type="submission" date="2008-10" db="EMBL/GenBank/DDBJ databases">
        <title>Genome sequence of Bacillus cereus B4264.</title>
        <authorList>
            <person name="Dodson R.J."/>
            <person name="Durkin A.S."/>
            <person name="Rosovitz M.J."/>
            <person name="Rasko D.A."/>
            <person name="Hoffmaster A."/>
            <person name="Ravel J."/>
            <person name="Sutton G."/>
        </authorList>
    </citation>
    <scope>NUCLEOTIDE SEQUENCE [LARGE SCALE GENOMIC DNA]</scope>
    <source>
        <strain>B4264</strain>
    </source>
</reference>
<comment type="function">
    <text evidence="1">Catalyzes the formation of phosphatidylethanolamine (PtdEtn) from phosphatidylserine (PtdSer).</text>
</comment>
<comment type="catalytic activity">
    <reaction evidence="1">
        <text>a 1,2-diacyl-sn-glycero-3-phospho-L-serine + H(+) = a 1,2-diacyl-sn-glycero-3-phosphoethanolamine + CO2</text>
        <dbReference type="Rhea" id="RHEA:20828"/>
        <dbReference type="ChEBI" id="CHEBI:15378"/>
        <dbReference type="ChEBI" id="CHEBI:16526"/>
        <dbReference type="ChEBI" id="CHEBI:57262"/>
        <dbReference type="ChEBI" id="CHEBI:64612"/>
        <dbReference type="EC" id="4.1.1.65"/>
    </reaction>
</comment>
<comment type="cofactor">
    <cofactor evidence="1">
        <name>pyruvate</name>
        <dbReference type="ChEBI" id="CHEBI:15361"/>
    </cofactor>
    <text evidence="1">Binds 1 pyruvoyl group covalently per subunit.</text>
</comment>
<comment type="pathway">
    <text evidence="1">Phospholipid metabolism; phosphatidylethanolamine biosynthesis; phosphatidylethanolamine from CDP-diacylglycerol: step 2/2.</text>
</comment>
<comment type="subunit">
    <text evidence="1">Heterodimer of a large membrane-associated beta subunit and a small pyruvoyl-containing alpha subunit.</text>
</comment>
<comment type="subcellular location">
    <subcellularLocation>
        <location evidence="1">Cell membrane</location>
        <topology evidence="1">Peripheral membrane protein</topology>
    </subcellularLocation>
</comment>
<comment type="PTM">
    <text evidence="1">Is synthesized initially as an inactive proenzyme. Formation of the active enzyme involves a self-maturation process in which the active site pyruvoyl group is generated from an internal serine residue via an autocatalytic post-translational modification. Two non-identical subunits are generated from the proenzyme in this reaction, and the pyruvate is formed at the N-terminus of the alpha chain, which is derived from the carboxyl end of the proenzyme. The autoendoproteolytic cleavage occurs by a canonical serine protease mechanism, in which the side chain hydroxyl group of the serine supplies its oxygen atom to form the C-terminus of the beta chain, while the remainder of the serine residue undergoes an oxidative deamination to produce ammonia and the pyruvoyl prosthetic group on the alpha chain. During this reaction, the Ser that is part of the protease active site of the proenzyme becomes the pyruvoyl prosthetic group, which constitutes an essential element of the active site of the mature decarboxylase.</text>
</comment>
<comment type="similarity">
    <text evidence="1">Belongs to the phosphatidylserine decarboxylase family. PSD-B subfamily. Prokaryotic type I sub-subfamily.</text>
</comment>
<protein>
    <recommendedName>
        <fullName evidence="1">Phosphatidylserine decarboxylase proenzyme</fullName>
        <ecNumber evidence="1">4.1.1.65</ecNumber>
    </recommendedName>
    <component>
        <recommendedName>
            <fullName evidence="1">Phosphatidylserine decarboxylase alpha chain</fullName>
        </recommendedName>
    </component>
    <component>
        <recommendedName>
            <fullName evidence="1">Phosphatidylserine decarboxylase beta chain</fullName>
        </recommendedName>
    </component>
</protein>
<organism>
    <name type="scientific">Bacillus cereus (strain B4264)</name>
    <dbReference type="NCBI Taxonomy" id="405532"/>
    <lineage>
        <taxon>Bacteria</taxon>
        <taxon>Bacillati</taxon>
        <taxon>Bacillota</taxon>
        <taxon>Bacilli</taxon>
        <taxon>Bacillales</taxon>
        <taxon>Bacillaceae</taxon>
        <taxon>Bacillus</taxon>
        <taxon>Bacillus cereus group</taxon>
    </lineage>
</organism>
<proteinExistence type="inferred from homology"/>
<gene>
    <name evidence="1" type="primary">psd</name>
    <name type="ordered locus">BCB4264_A4458</name>
</gene>
<accession>B7HCW5</accession>
<keyword id="KW-1003">Cell membrane</keyword>
<keyword id="KW-0210">Decarboxylase</keyword>
<keyword id="KW-0444">Lipid biosynthesis</keyword>
<keyword id="KW-0443">Lipid metabolism</keyword>
<keyword id="KW-0456">Lyase</keyword>
<keyword id="KW-0472">Membrane</keyword>
<keyword id="KW-0594">Phospholipid biosynthesis</keyword>
<keyword id="KW-1208">Phospholipid metabolism</keyword>
<keyword id="KW-0670">Pyruvate</keyword>
<keyword id="KW-0865">Zymogen</keyword>
<dbReference type="EC" id="4.1.1.65" evidence="1"/>
<dbReference type="EMBL" id="CP001176">
    <property type="protein sequence ID" value="ACK59829.1"/>
    <property type="molecule type" value="Genomic_DNA"/>
</dbReference>
<dbReference type="RefSeq" id="WP_001255000.1">
    <property type="nucleotide sequence ID" value="NZ_VEHB01000006.1"/>
</dbReference>
<dbReference type="SMR" id="B7HCW5"/>
<dbReference type="KEGG" id="bcb:BCB4264_A4458"/>
<dbReference type="HOGENOM" id="CLU_029061_4_0_9"/>
<dbReference type="UniPathway" id="UPA00558">
    <property type="reaction ID" value="UER00616"/>
</dbReference>
<dbReference type="Proteomes" id="UP000007096">
    <property type="component" value="Chromosome"/>
</dbReference>
<dbReference type="GO" id="GO:0005886">
    <property type="term" value="C:plasma membrane"/>
    <property type="evidence" value="ECO:0007669"/>
    <property type="project" value="UniProtKB-SubCell"/>
</dbReference>
<dbReference type="GO" id="GO:0004609">
    <property type="term" value="F:phosphatidylserine decarboxylase activity"/>
    <property type="evidence" value="ECO:0007669"/>
    <property type="project" value="UniProtKB-UniRule"/>
</dbReference>
<dbReference type="GO" id="GO:0006646">
    <property type="term" value="P:phosphatidylethanolamine biosynthetic process"/>
    <property type="evidence" value="ECO:0007669"/>
    <property type="project" value="UniProtKB-UniRule"/>
</dbReference>
<dbReference type="HAMAP" id="MF_00662">
    <property type="entry name" value="PS_decarb_PSD_B_type1"/>
    <property type="match status" value="1"/>
</dbReference>
<dbReference type="InterPro" id="IPR003817">
    <property type="entry name" value="PS_Dcarbxylase"/>
</dbReference>
<dbReference type="InterPro" id="IPR033177">
    <property type="entry name" value="PSD-B"/>
</dbReference>
<dbReference type="InterPro" id="IPR033178">
    <property type="entry name" value="PSD_type1_pro"/>
</dbReference>
<dbReference type="NCBIfam" id="NF002853">
    <property type="entry name" value="PRK03140.1"/>
    <property type="match status" value="1"/>
</dbReference>
<dbReference type="NCBIfam" id="TIGR00163">
    <property type="entry name" value="PS_decarb"/>
    <property type="match status" value="1"/>
</dbReference>
<dbReference type="PANTHER" id="PTHR10067">
    <property type="entry name" value="PHOSPHATIDYLSERINE DECARBOXYLASE"/>
    <property type="match status" value="1"/>
</dbReference>
<dbReference type="PANTHER" id="PTHR10067:SF6">
    <property type="entry name" value="PHOSPHATIDYLSERINE DECARBOXYLASE PROENZYME, MITOCHONDRIAL"/>
    <property type="match status" value="1"/>
</dbReference>
<dbReference type="Pfam" id="PF02666">
    <property type="entry name" value="PS_Dcarbxylase"/>
    <property type="match status" value="1"/>
</dbReference>
<feature type="chain" id="PRO_1000131344" description="Phosphatidylserine decarboxylase beta chain" evidence="1">
    <location>
        <begin position="1"/>
        <end position="225"/>
    </location>
</feature>
<feature type="chain" id="PRO_1000131345" description="Phosphatidylserine decarboxylase alpha chain" evidence="1">
    <location>
        <begin position="226"/>
        <end position="262"/>
    </location>
</feature>
<feature type="active site" description="Charge relay system; for autoendoproteolytic cleavage activity" evidence="1">
    <location>
        <position position="86"/>
    </location>
</feature>
<feature type="active site" description="Charge relay system; for autoendoproteolytic cleavage activity" evidence="1">
    <location>
        <position position="142"/>
    </location>
</feature>
<feature type="active site" description="Charge relay system; for autoendoproteolytic cleavage activity" evidence="1">
    <location>
        <position position="226"/>
    </location>
</feature>
<feature type="active site" description="Schiff-base intermediate with substrate; via pyruvic acid; for decarboxylase activity" evidence="1">
    <location>
        <position position="226"/>
    </location>
</feature>
<feature type="site" description="Cleavage (non-hydrolytic); by autocatalysis" evidence="1">
    <location>
        <begin position="225"/>
        <end position="226"/>
    </location>
</feature>
<feature type="modified residue" description="Pyruvic acid (Ser); by autocatalysis" evidence="1">
    <location>
        <position position="226"/>
    </location>
</feature>
<evidence type="ECO:0000255" key="1">
    <source>
        <dbReference type="HAMAP-Rule" id="MF_00662"/>
    </source>
</evidence>
<name>PSD_BACC4</name>
<sequence>MRRTLYRLMIELTNGRFTSYILRKFAQSRLSSIIIPSYAKVFQINQDEMEKGLKEYRTLHELFTRKLKEGKRSIDTDASSIVSPVDGVFADHGPIEDTKTFDIKGKRYSIVDMLGNEERATRYAGGTYMVIYLSPSHYHRIHSPLSGSVTERFVLGRKSYPVNAAGMEYGKEPLSKNYRSVTEVSSDGEHMALVKVGAMFVNSIELLHERDTVQKGEEMAYFTFGSTVVLLFEKDMIEVVQELKSGQELRLGEKIATRLAHK</sequence>